<accession>A1U3C2</accession>
<organism>
    <name type="scientific">Marinobacter nauticus (strain ATCC 700491 / DSM 11845 / VT8)</name>
    <name type="common">Marinobacter aquaeolei</name>
    <dbReference type="NCBI Taxonomy" id="351348"/>
    <lineage>
        <taxon>Bacteria</taxon>
        <taxon>Pseudomonadati</taxon>
        <taxon>Pseudomonadota</taxon>
        <taxon>Gammaproteobacteria</taxon>
        <taxon>Pseudomonadales</taxon>
        <taxon>Marinobacteraceae</taxon>
        <taxon>Marinobacter</taxon>
    </lineage>
</organism>
<dbReference type="EC" id="2.7.7.18" evidence="1"/>
<dbReference type="EMBL" id="CP000514">
    <property type="protein sequence ID" value="ABM19491.1"/>
    <property type="molecule type" value="Genomic_DNA"/>
</dbReference>
<dbReference type="RefSeq" id="WP_011785875.1">
    <property type="nucleotide sequence ID" value="NC_008740.1"/>
</dbReference>
<dbReference type="SMR" id="A1U3C2"/>
<dbReference type="STRING" id="351348.Maqu_2416"/>
<dbReference type="KEGG" id="maq:Maqu_2416"/>
<dbReference type="eggNOG" id="COG1057">
    <property type="taxonomic scope" value="Bacteria"/>
</dbReference>
<dbReference type="HOGENOM" id="CLU_069765_0_0_6"/>
<dbReference type="OrthoDB" id="5295945at2"/>
<dbReference type="UniPathway" id="UPA00253">
    <property type="reaction ID" value="UER00332"/>
</dbReference>
<dbReference type="Proteomes" id="UP000000998">
    <property type="component" value="Chromosome"/>
</dbReference>
<dbReference type="GO" id="GO:0005524">
    <property type="term" value="F:ATP binding"/>
    <property type="evidence" value="ECO:0007669"/>
    <property type="project" value="UniProtKB-KW"/>
</dbReference>
<dbReference type="GO" id="GO:0004515">
    <property type="term" value="F:nicotinate-nucleotide adenylyltransferase activity"/>
    <property type="evidence" value="ECO:0007669"/>
    <property type="project" value="UniProtKB-UniRule"/>
</dbReference>
<dbReference type="GO" id="GO:0009435">
    <property type="term" value="P:NAD biosynthetic process"/>
    <property type="evidence" value="ECO:0007669"/>
    <property type="project" value="UniProtKB-UniRule"/>
</dbReference>
<dbReference type="CDD" id="cd02165">
    <property type="entry name" value="NMNAT"/>
    <property type="match status" value="1"/>
</dbReference>
<dbReference type="Gene3D" id="3.40.50.620">
    <property type="entry name" value="HUPs"/>
    <property type="match status" value="1"/>
</dbReference>
<dbReference type="HAMAP" id="MF_00244">
    <property type="entry name" value="NaMN_adenylyltr"/>
    <property type="match status" value="1"/>
</dbReference>
<dbReference type="InterPro" id="IPR004821">
    <property type="entry name" value="Cyt_trans-like"/>
</dbReference>
<dbReference type="InterPro" id="IPR005248">
    <property type="entry name" value="NadD/NMNAT"/>
</dbReference>
<dbReference type="InterPro" id="IPR014729">
    <property type="entry name" value="Rossmann-like_a/b/a_fold"/>
</dbReference>
<dbReference type="NCBIfam" id="TIGR00125">
    <property type="entry name" value="cyt_tran_rel"/>
    <property type="match status" value="1"/>
</dbReference>
<dbReference type="NCBIfam" id="TIGR00482">
    <property type="entry name" value="nicotinate (nicotinamide) nucleotide adenylyltransferase"/>
    <property type="match status" value="1"/>
</dbReference>
<dbReference type="NCBIfam" id="NF000839">
    <property type="entry name" value="PRK00071.1-1"/>
    <property type="match status" value="1"/>
</dbReference>
<dbReference type="NCBIfam" id="NF000840">
    <property type="entry name" value="PRK00071.1-3"/>
    <property type="match status" value="1"/>
</dbReference>
<dbReference type="PANTHER" id="PTHR39321">
    <property type="entry name" value="NICOTINATE-NUCLEOTIDE ADENYLYLTRANSFERASE-RELATED"/>
    <property type="match status" value="1"/>
</dbReference>
<dbReference type="PANTHER" id="PTHR39321:SF3">
    <property type="entry name" value="PHOSPHOPANTETHEINE ADENYLYLTRANSFERASE"/>
    <property type="match status" value="1"/>
</dbReference>
<dbReference type="Pfam" id="PF01467">
    <property type="entry name" value="CTP_transf_like"/>
    <property type="match status" value="1"/>
</dbReference>
<dbReference type="SUPFAM" id="SSF52374">
    <property type="entry name" value="Nucleotidylyl transferase"/>
    <property type="match status" value="1"/>
</dbReference>
<evidence type="ECO:0000255" key="1">
    <source>
        <dbReference type="HAMAP-Rule" id="MF_00244"/>
    </source>
</evidence>
<gene>
    <name evidence="1" type="primary">nadD</name>
    <name type="ordered locus">Maqu_2416</name>
</gene>
<keyword id="KW-0067">ATP-binding</keyword>
<keyword id="KW-0520">NAD</keyword>
<keyword id="KW-0547">Nucleotide-binding</keyword>
<keyword id="KW-0548">Nucleotidyltransferase</keyword>
<keyword id="KW-0662">Pyridine nucleotide biosynthesis</keyword>
<keyword id="KW-0808">Transferase</keyword>
<feature type="chain" id="PRO_0000336704" description="Probable nicotinate-nucleotide adenylyltransferase">
    <location>
        <begin position="1"/>
        <end position="216"/>
    </location>
</feature>
<comment type="function">
    <text evidence="1">Catalyzes the reversible adenylation of nicotinate mononucleotide (NaMN) to nicotinic acid adenine dinucleotide (NaAD).</text>
</comment>
<comment type="catalytic activity">
    <reaction evidence="1">
        <text>nicotinate beta-D-ribonucleotide + ATP + H(+) = deamido-NAD(+) + diphosphate</text>
        <dbReference type="Rhea" id="RHEA:22860"/>
        <dbReference type="ChEBI" id="CHEBI:15378"/>
        <dbReference type="ChEBI" id="CHEBI:30616"/>
        <dbReference type="ChEBI" id="CHEBI:33019"/>
        <dbReference type="ChEBI" id="CHEBI:57502"/>
        <dbReference type="ChEBI" id="CHEBI:58437"/>
        <dbReference type="EC" id="2.7.7.18"/>
    </reaction>
</comment>
<comment type="pathway">
    <text evidence="1">Cofactor biosynthesis; NAD(+) biosynthesis; deamido-NAD(+) from nicotinate D-ribonucleotide: step 1/1.</text>
</comment>
<comment type="similarity">
    <text evidence="1">Belongs to the NadD family.</text>
</comment>
<reference key="1">
    <citation type="journal article" date="2011" name="Appl. Environ. Microbiol.">
        <title>Genomic potential of Marinobacter aquaeolei, a biogeochemical 'opportunitroph'.</title>
        <authorList>
            <person name="Singer E."/>
            <person name="Webb E.A."/>
            <person name="Nelson W.C."/>
            <person name="Heidelberg J.F."/>
            <person name="Ivanova N."/>
            <person name="Pati A."/>
            <person name="Edwards K.J."/>
        </authorList>
    </citation>
    <scope>NUCLEOTIDE SEQUENCE [LARGE SCALE GENOMIC DNA]</scope>
    <source>
        <strain>ATCC 700491 / DSM 11845 / VT8</strain>
    </source>
</reference>
<name>NADD_MARN8</name>
<sequence>MHVIYGGTFDPIHHGHLRLALEVSEALEVSRVHLVPSHIPPHRGSTGASSAQRLEMIRQAIAGEPALALDEQEVHRGGASYTADTLRQLRAELGPDCPLVMVVGTDAFSSFDRWREWQEIPGLAHIVVVRRPGSELPVGSEAAQLVAERCVGSASELHSRPAGLVLELAPPLLDISATGIRRRIAAGRSPRYLTPDDVCQSIRAWGLYGARPVEGQ</sequence>
<protein>
    <recommendedName>
        <fullName evidence="1">Probable nicotinate-nucleotide adenylyltransferase</fullName>
        <ecNumber evidence="1">2.7.7.18</ecNumber>
    </recommendedName>
    <alternativeName>
        <fullName evidence="1">Deamido-NAD(+) diphosphorylase</fullName>
    </alternativeName>
    <alternativeName>
        <fullName evidence="1">Deamido-NAD(+) pyrophosphorylase</fullName>
    </alternativeName>
    <alternativeName>
        <fullName evidence="1">Nicotinate mononucleotide adenylyltransferase</fullName>
        <shortName evidence="1">NaMN adenylyltransferase</shortName>
    </alternativeName>
</protein>
<proteinExistence type="inferred from homology"/>